<gene>
    <name evidence="1" type="primary">ruvC</name>
    <name type="ordered locus">FTM_1202</name>
</gene>
<dbReference type="EC" id="3.1.21.10" evidence="1"/>
<dbReference type="EMBL" id="CP000915">
    <property type="protein sequence ID" value="ACD31077.1"/>
    <property type="molecule type" value="Genomic_DNA"/>
</dbReference>
<dbReference type="SMR" id="B2SH69"/>
<dbReference type="KEGG" id="ftm:FTM_1202"/>
<dbReference type="HOGENOM" id="CLU_091257_2_1_6"/>
<dbReference type="GO" id="GO:0005737">
    <property type="term" value="C:cytoplasm"/>
    <property type="evidence" value="ECO:0007669"/>
    <property type="project" value="UniProtKB-SubCell"/>
</dbReference>
<dbReference type="GO" id="GO:0048476">
    <property type="term" value="C:Holliday junction resolvase complex"/>
    <property type="evidence" value="ECO:0007669"/>
    <property type="project" value="UniProtKB-UniRule"/>
</dbReference>
<dbReference type="GO" id="GO:0008821">
    <property type="term" value="F:crossover junction DNA endonuclease activity"/>
    <property type="evidence" value="ECO:0007669"/>
    <property type="project" value="UniProtKB-UniRule"/>
</dbReference>
<dbReference type="GO" id="GO:0003677">
    <property type="term" value="F:DNA binding"/>
    <property type="evidence" value="ECO:0007669"/>
    <property type="project" value="UniProtKB-KW"/>
</dbReference>
<dbReference type="GO" id="GO:0000287">
    <property type="term" value="F:magnesium ion binding"/>
    <property type="evidence" value="ECO:0007669"/>
    <property type="project" value="UniProtKB-UniRule"/>
</dbReference>
<dbReference type="GO" id="GO:0006310">
    <property type="term" value="P:DNA recombination"/>
    <property type="evidence" value="ECO:0007669"/>
    <property type="project" value="UniProtKB-UniRule"/>
</dbReference>
<dbReference type="GO" id="GO:0006281">
    <property type="term" value="P:DNA repair"/>
    <property type="evidence" value="ECO:0007669"/>
    <property type="project" value="UniProtKB-UniRule"/>
</dbReference>
<dbReference type="CDD" id="cd16962">
    <property type="entry name" value="RuvC"/>
    <property type="match status" value="1"/>
</dbReference>
<dbReference type="FunFam" id="3.30.420.10:FF:000002">
    <property type="entry name" value="Crossover junction endodeoxyribonuclease RuvC"/>
    <property type="match status" value="1"/>
</dbReference>
<dbReference type="Gene3D" id="3.30.420.10">
    <property type="entry name" value="Ribonuclease H-like superfamily/Ribonuclease H"/>
    <property type="match status" value="1"/>
</dbReference>
<dbReference type="HAMAP" id="MF_00034">
    <property type="entry name" value="RuvC"/>
    <property type="match status" value="1"/>
</dbReference>
<dbReference type="InterPro" id="IPR012337">
    <property type="entry name" value="RNaseH-like_sf"/>
</dbReference>
<dbReference type="InterPro" id="IPR036397">
    <property type="entry name" value="RNaseH_sf"/>
</dbReference>
<dbReference type="InterPro" id="IPR020563">
    <property type="entry name" value="X-over_junc_endoDNase_Mg_BS"/>
</dbReference>
<dbReference type="InterPro" id="IPR002176">
    <property type="entry name" value="X-over_junc_endoDNase_RuvC"/>
</dbReference>
<dbReference type="NCBIfam" id="NF000711">
    <property type="entry name" value="PRK00039.2-1"/>
    <property type="match status" value="1"/>
</dbReference>
<dbReference type="NCBIfam" id="TIGR00228">
    <property type="entry name" value="ruvC"/>
    <property type="match status" value="1"/>
</dbReference>
<dbReference type="PANTHER" id="PTHR30194">
    <property type="entry name" value="CROSSOVER JUNCTION ENDODEOXYRIBONUCLEASE RUVC"/>
    <property type="match status" value="1"/>
</dbReference>
<dbReference type="PANTHER" id="PTHR30194:SF3">
    <property type="entry name" value="CROSSOVER JUNCTION ENDODEOXYRIBONUCLEASE RUVC"/>
    <property type="match status" value="1"/>
</dbReference>
<dbReference type="Pfam" id="PF02075">
    <property type="entry name" value="RuvC"/>
    <property type="match status" value="1"/>
</dbReference>
<dbReference type="PRINTS" id="PR00696">
    <property type="entry name" value="RSOLVASERUVC"/>
</dbReference>
<dbReference type="SUPFAM" id="SSF53098">
    <property type="entry name" value="Ribonuclease H-like"/>
    <property type="match status" value="1"/>
</dbReference>
<dbReference type="PROSITE" id="PS01321">
    <property type="entry name" value="RUVC"/>
    <property type="match status" value="1"/>
</dbReference>
<keyword id="KW-0963">Cytoplasm</keyword>
<keyword id="KW-0227">DNA damage</keyword>
<keyword id="KW-0233">DNA recombination</keyword>
<keyword id="KW-0234">DNA repair</keyword>
<keyword id="KW-0238">DNA-binding</keyword>
<keyword id="KW-0255">Endonuclease</keyword>
<keyword id="KW-0378">Hydrolase</keyword>
<keyword id="KW-0460">Magnesium</keyword>
<keyword id="KW-0479">Metal-binding</keyword>
<keyword id="KW-0540">Nuclease</keyword>
<protein>
    <recommendedName>
        <fullName evidence="1">Crossover junction endodeoxyribonuclease RuvC</fullName>
        <ecNumber evidence="1">3.1.21.10</ecNumber>
    </recommendedName>
    <alternativeName>
        <fullName evidence="1">Holliday junction nuclease RuvC</fullName>
    </alternativeName>
    <alternativeName>
        <fullName evidence="1">Holliday junction resolvase RuvC</fullName>
    </alternativeName>
</protein>
<name>RUVC_FRATM</name>
<accession>B2SH69</accession>
<organism>
    <name type="scientific">Francisella tularensis subsp. mediasiatica (strain FSC147)</name>
    <dbReference type="NCBI Taxonomy" id="441952"/>
    <lineage>
        <taxon>Bacteria</taxon>
        <taxon>Pseudomonadati</taxon>
        <taxon>Pseudomonadota</taxon>
        <taxon>Gammaproteobacteria</taxon>
        <taxon>Thiotrichales</taxon>
        <taxon>Francisellaceae</taxon>
        <taxon>Francisella</taxon>
    </lineage>
</organism>
<proteinExistence type="inferred from homology"/>
<sequence length="171" mass="18297">MVILGIDPGSRITGFGVIKVQDNKIYYVASGCIRITEITTPKRLKQIADGITQIINIYAPTEAAIEQIFMFQNPMGAIKLGQARGVAMCTLAINNLEVSEYSAKQIKQAVVGTGGAAKSQVQHMVQSLLGLSKKPPEDAADALAIAICHYHSSKSLAKISGASRVSQKRIK</sequence>
<evidence type="ECO:0000255" key="1">
    <source>
        <dbReference type="HAMAP-Rule" id="MF_00034"/>
    </source>
</evidence>
<feature type="chain" id="PRO_1000090528" description="Crossover junction endodeoxyribonuclease RuvC">
    <location>
        <begin position="1"/>
        <end position="171"/>
    </location>
</feature>
<feature type="active site" evidence="1">
    <location>
        <position position="7"/>
    </location>
</feature>
<feature type="active site" evidence="1">
    <location>
        <position position="66"/>
    </location>
</feature>
<feature type="active site" evidence="1">
    <location>
        <position position="138"/>
    </location>
</feature>
<feature type="binding site" evidence="1">
    <location>
        <position position="7"/>
    </location>
    <ligand>
        <name>Mg(2+)</name>
        <dbReference type="ChEBI" id="CHEBI:18420"/>
        <label>1</label>
    </ligand>
</feature>
<feature type="binding site" evidence="1">
    <location>
        <position position="66"/>
    </location>
    <ligand>
        <name>Mg(2+)</name>
        <dbReference type="ChEBI" id="CHEBI:18420"/>
        <label>2</label>
    </ligand>
</feature>
<feature type="binding site" evidence="1">
    <location>
        <position position="138"/>
    </location>
    <ligand>
        <name>Mg(2+)</name>
        <dbReference type="ChEBI" id="CHEBI:18420"/>
        <label>1</label>
    </ligand>
</feature>
<reference key="1">
    <citation type="journal article" date="2009" name="PLoS Pathog.">
        <title>Molecular evolutionary consequences of niche restriction in Francisella tularensis, a facultative intracellular pathogen.</title>
        <authorList>
            <person name="Larsson P."/>
            <person name="Elfsmark D."/>
            <person name="Svensson K."/>
            <person name="Wikstroem P."/>
            <person name="Forsman M."/>
            <person name="Brettin T."/>
            <person name="Keim P."/>
            <person name="Johansson A."/>
        </authorList>
    </citation>
    <scope>NUCLEOTIDE SEQUENCE [LARGE SCALE GENOMIC DNA]</scope>
    <source>
        <strain>FSC147</strain>
    </source>
</reference>
<comment type="function">
    <text evidence="1">The RuvA-RuvB-RuvC complex processes Holliday junction (HJ) DNA during genetic recombination and DNA repair. Endonuclease that resolves HJ intermediates. Cleaves cruciform DNA by making single-stranded nicks across the HJ at symmetrical positions within the homologous arms, yielding a 5'-phosphate and a 3'-hydroxyl group; requires a central core of homology in the junction. The consensus cleavage sequence is 5'-(A/T)TT(C/G)-3'. Cleavage occurs on the 3'-side of the TT dinucleotide at the point of strand exchange. HJ branch migration catalyzed by RuvA-RuvB allows RuvC to scan DNA until it finds its consensus sequence, where it cleaves and resolves the cruciform DNA.</text>
</comment>
<comment type="catalytic activity">
    <reaction evidence="1">
        <text>Endonucleolytic cleavage at a junction such as a reciprocal single-stranded crossover between two homologous DNA duplexes (Holliday junction).</text>
        <dbReference type="EC" id="3.1.21.10"/>
    </reaction>
</comment>
<comment type="cofactor">
    <cofactor evidence="1">
        <name>Mg(2+)</name>
        <dbReference type="ChEBI" id="CHEBI:18420"/>
    </cofactor>
    <text evidence="1">Binds 2 Mg(2+) ion per subunit.</text>
</comment>
<comment type="subunit">
    <text evidence="1">Homodimer which binds Holliday junction (HJ) DNA. The HJ becomes 2-fold symmetrical on binding to RuvC with unstacked arms; it has a different conformation from HJ DNA in complex with RuvA. In the full resolvosome a probable DNA-RuvA(4)-RuvB(12)-RuvC(2) complex forms which resolves the HJ.</text>
</comment>
<comment type="subcellular location">
    <subcellularLocation>
        <location evidence="1">Cytoplasm</location>
    </subcellularLocation>
</comment>
<comment type="similarity">
    <text evidence="1">Belongs to the RuvC family.</text>
</comment>